<gene>
    <name evidence="1" type="primary">panB</name>
    <name type="ordered locus">Reut_A2780</name>
</gene>
<keyword id="KW-0963">Cytoplasm</keyword>
<keyword id="KW-0460">Magnesium</keyword>
<keyword id="KW-0479">Metal-binding</keyword>
<keyword id="KW-0566">Pantothenate biosynthesis</keyword>
<keyword id="KW-0808">Transferase</keyword>
<reference key="1">
    <citation type="journal article" date="2010" name="PLoS ONE">
        <title>The complete multipartite genome sequence of Cupriavidus necator JMP134, a versatile pollutant degrader.</title>
        <authorList>
            <person name="Lykidis A."/>
            <person name="Perez-Pantoja D."/>
            <person name="Ledger T."/>
            <person name="Mavromatis K."/>
            <person name="Anderson I.J."/>
            <person name="Ivanova N.N."/>
            <person name="Hooper S.D."/>
            <person name="Lapidus A."/>
            <person name="Lucas S."/>
            <person name="Gonzalez B."/>
            <person name="Kyrpides N.C."/>
        </authorList>
    </citation>
    <scope>NUCLEOTIDE SEQUENCE [LARGE SCALE GENOMIC DNA]</scope>
    <source>
        <strain>JMP134 / LMG 1197</strain>
    </source>
</reference>
<organism>
    <name type="scientific">Cupriavidus pinatubonensis (strain JMP 134 / LMG 1197)</name>
    <name type="common">Cupriavidus necator (strain JMP 134)</name>
    <dbReference type="NCBI Taxonomy" id="264198"/>
    <lineage>
        <taxon>Bacteria</taxon>
        <taxon>Pseudomonadati</taxon>
        <taxon>Pseudomonadota</taxon>
        <taxon>Betaproteobacteria</taxon>
        <taxon>Burkholderiales</taxon>
        <taxon>Burkholderiaceae</taxon>
        <taxon>Cupriavidus</taxon>
    </lineage>
</organism>
<dbReference type="EC" id="2.1.2.11" evidence="1"/>
<dbReference type="EMBL" id="CP000090">
    <property type="protein sequence ID" value="AAZ62141.1"/>
    <property type="molecule type" value="Genomic_DNA"/>
</dbReference>
<dbReference type="SMR" id="Q46XJ2"/>
<dbReference type="STRING" id="264198.Reut_A2780"/>
<dbReference type="KEGG" id="reu:Reut_A2780"/>
<dbReference type="eggNOG" id="COG0413">
    <property type="taxonomic scope" value="Bacteria"/>
</dbReference>
<dbReference type="HOGENOM" id="CLU_036645_1_0_4"/>
<dbReference type="OrthoDB" id="9781789at2"/>
<dbReference type="UniPathway" id="UPA00028">
    <property type="reaction ID" value="UER00003"/>
</dbReference>
<dbReference type="GO" id="GO:0005737">
    <property type="term" value="C:cytoplasm"/>
    <property type="evidence" value="ECO:0007669"/>
    <property type="project" value="UniProtKB-SubCell"/>
</dbReference>
<dbReference type="GO" id="GO:0003864">
    <property type="term" value="F:3-methyl-2-oxobutanoate hydroxymethyltransferase activity"/>
    <property type="evidence" value="ECO:0007669"/>
    <property type="project" value="UniProtKB-UniRule"/>
</dbReference>
<dbReference type="GO" id="GO:0000287">
    <property type="term" value="F:magnesium ion binding"/>
    <property type="evidence" value="ECO:0007669"/>
    <property type="project" value="TreeGrafter"/>
</dbReference>
<dbReference type="GO" id="GO:0015940">
    <property type="term" value="P:pantothenate biosynthetic process"/>
    <property type="evidence" value="ECO:0007669"/>
    <property type="project" value="UniProtKB-UniRule"/>
</dbReference>
<dbReference type="CDD" id="cd06557">
    <property type="entry name" value="KPHMT-like"/>
    <property type="match status" value="1"/>
</dbReference>
<dbReference type="FunFam" id="3.20.20.60:FF:000003">
    <property type="entry name" value="3-methyl-2-oxobutanoate hydroxymethyltransferase"/>
    <property type="match status" value="1"/>
</dbReference>
<dbReference type="Gene3D" id="3.20.20.60">
    <property type="entry name" value="Phosphoenolpyruvate-binding domains"/>
    <property type="match status" value="1"/>
</dbReference>
<dbReference type="HAMAP" id="MF_00156">
    <property type="entry name" value="PanB"/>
    <property type="match status" value="1"/>
</dbReference>
<dbReference type="InterPro" id="IPR003700">
    <property type="entry name" value="Pantoate_hydroxy_MeTrfase"/>
</dbReference>
<dbReference type="InterPro" id="IPR015813">
    <property type="entry name" value="Pyrv/PenolPyrv_kinase-like_dom"/>
</dbReference>
<dbReference type="InterPro" id="IPR040442">
    <property type="entry name" value="Pyrv_kinase-like_dom_sf"/>
</dbReference>
<dbReference type="NCBIfam" id="TIGR00222">
    <property type="entry name" value="panB"/>
    <property type="match status" value="1"/>
</dbReference>
<dbReference type="NCBIfam" id="NF001452">
    <property type="entry name" value="PRK00311.1"/>
    <property type="match status" value="1"/>
</dbReference>
<dbReference type="PANTHER" id="PTHR20881">
    <property type="entry name" value="3-METHYL-2-OXOBUTANOATE HYDROXYMETHYLTRANSFERASE"/>
    <property type="match status" value="1"/>
</dbReference>
<dbReference type="PANTHER" id="PTHR20881:SF0">
    <property type="entry name" value="3-METHYL-2-OXOBUTANOATE HYDROXYMETHYLTRANSFERASE"/>
    <property type="match status" value="1"/>
</dbReference>
<dbReference type="Pfam" id="PF02548">
    <property type="entry name" value="Pantoate_transf"/>
    <property type="match status" value="1"/>
</dbReference>
<dbReference type="PIRSF" id="PIRSF000388">
    <property type="entry name" value="Pantoate_hydroxy_MeTrfase"/>
    <property type="match status" value="1"/>
</dbReference>
<dbReference type="SUPFAM" id="SSF51621">
    <property type="entry name" value="Phosphoenolpyruvate/pyruvate domain"/>
    <property type="match status" value="1"/>
</dbReference>
<evidence type="ECO:0000255" key="1">
    <source>
        <dbReference type="HAMAP-Rule" id="MF_00156"/>
    </source>
</evidence>
<protein>
    <recommendedName>
        <fullName evidence="1">3-methyl-2-oxobutanoate hydroxymethyltransferase</fullName>
        <ecNumber evidence="1">2.1.2.11</ecNumber>
    </recommendedName>
    <alternativeName>
        <fullName evidence="1">Ketopantoate hydroxymethyltransferase</fullName>
        <shortName evidence="1">KPHMT</shortName>
    </alternativeName>
</protein>
<sequence>MSYLLDPSRKTVTITRLQAMRDAGEKIAMLTAYDSSFAALLDYCGVEVILVGDSLGNVMQGQQTTLPVTLEHMAYHTECVARANQTALLVTDLPFGTYGTPEMAFASAVTLMRAGAHMVKLEGGDWLAPTVKFLVERSIPVCAHIGLTPQSVHAFGGFKVQGKTDEGAAQLRRDAQAMEAAGAQIVLMEAVPATLAGEITQMLKVPTIGIGAGADCSGQVLVLQDMINVYPGRKAKFVRNFMDGQTTIEGAIRAYVAAVKDGSFPAAEHTFSA</sequence>
<accession>Q46XJ2</accession>
<proteinExistence type="inferred from homology"/>
<feature type="chain" id="PRO_0000297347" description="3-methyl-2-oxobutanoate hydroxymethyltransferase">
    <location>
        <begin position="1"/>
        <end position="273"/>
    </location>
</feature>
<feature type="active site" description="Proton acceptor" evidence="1">
    <location>
        <position position="189"/>
    </location>
</feature>
<feature type="binding site" evidence="1">
    <location>
        <begin position="53"/>
        <end position="54"/>
    </location>
    <ligand>
        <name>3-methyl-2-oxobutanoate</name>
        <dbReference type="ChEBI" id="CHEBI:11851"/>
    </ligand>
</feature>
<feature type="binding site" evidence="1">
    <location>
        <position position="53"/>
    </location>
    <ligand>
        <name>Mg(2+)</name>
        <dbReference type="ChEBI" id="CHEBI:18420"/>
    </ligand>
</feature>
<feature type="binding site" evidence="1">
    <location>
        <position position="92"/>
    </location>
    <ligand>
        <name>3-methyl-2-oxobutanoate</name>
        <dbReference type="ChEBI" id="CHEBI:11851"/>
    </ligand>
</feature>
<feature type="binding site" evidence="1">
    <location>
        <position position="92"/>
    </location>
    <ligand>
        <name>Mg(2+)</name>
        <dbReference type="ChEBI" id="CHEBI:18420"/>
    </ligand>
</feature>
<feature type="binding site" evidence="1">
    <location>
        <position position="120"/>
    </location>
    <ligand>
        <name>3-methyl-2-oxobutanoate</name>
        <dbReference type="ChEBI" id="CHEBI:11851"/>
    </ligand>
</feature>
<feature type="binding site" evidence="1">
    <location>
        <position position="122"/>
    </location>
    <ligand>
        <name>Mg(2+)</name>
        <dbReference type="ChEBI" id="CHEBI:18420"/>
    </ligand>
</feature>
<comment type="function">
    <text evidence="1">Catalyzes the reversible reaction in which hydroxymethyl group from 5,10-methylenetetrahydrofolate is transferred onto alpha-ketoisovalerate to form ketopantoate.</text>
</comment>
<comment type="catalytic activity">
    <reaction evidence="1">
        <text>3-methyl-2-oxobutanoate + (6R)-5,10-methylene-5,6,7,8-tetrahydrofolate + H2O = 2-dehydropantoate + (6S)-5,6,7,8-tetrahydrofolate</text>
        <dbReference type="Rhea" id="RHEA:11824"/>
        <dbReference type="ChEBI" id="CHEBI:11561"/>
        <dbReference type="ChEBI" id="CHEBI:11851"/>
        <dbReference type="ChEBI" id="CHEBI:15377"/>
        <dbReference type="ChEBI" id="CHEBI:15636"/>
        <dbReference type="ChEBI" id="CHEBI:57453"/>
        <dbReference type="EC" id="2.1.2.11"/>
    </reaction>
</comment>
<comment type="cofactor">
    <cofactor evidence="1">
        <name>Mg(2+)</name>
        <dbReference type="ChEBI" id="CHEBI:18420"/>
    </cofactor>
    <text evidence="1">Binds 1 Mg(2+) ion per subunit.</text>
</comment>
<comment type="pathway">
    <text evidence="1">Cofactor biosynthesis; (R)-pantothenate biosynthesis; (R)-pantoate from 3-methyl-2-oxobutanoate: step 1/2.</text>
</comment>
<comment type="subunit">
    <text evidence="1">Homodecamer; pentamer of dimers.</text>
</comment>
<comment type="subcellular location">
    <subcellularLocation>
        <location evidence="1">Cytoplasm</location>
    </subcellularLocation>
</comment>
<comment type="similarity">
    <text evidence="1">Belongs to the PanB family.</text>
</comment>
<name>PANB_CUPPJ</name>